<gene>
    <name evidence="1" type="primary">valS</name>
    <name type="ordered locus">XF_0134</name>
</gene>
<organism>
    <name type="scientific">Xylella fastidiosa (strain 9a5c)</name>
    <dbReference type="NCBI Taxonomy" id="160492"/>
    <lineage>
        <taxon>Bacteria</taxon>
        <taxon>Pseudomonadati</taxon>
        <taxon>Pseudomonadota</taxon>
        <taxon>Gammaproteobacteria</taxon>
        <taxon>Lysobacterales</taxon>
        <taxon>Lysobacteraceae</taxon>
        <taxon>Xylella</taxon>
    </lineage>
</organism>
<dbReference type="EC" id="6.1.1.9" evidence="1"/>
<dbReference type="EMBL" id="AE003849">
    <property type="protein sequence ID" value="AAF82947.1"/>
    <property type="molecule type" value="Genomic_DNA"/>
</dbReference>
<dbReference type="PIR" id="B82843">
    <property type="entry name" value="B82843"/>
</dbReference>
<dbReference type="RefSeq" id="WP_010892679.1">
    <property type="nucleotide sequence ID" value="NC_002488.3"/>
</dbReference>
<dbReference type="SMR" id="Q9PH12"/>
<dbReference type="STRING" id="160492.XF_0134"/>
<dbReference type="KEGG" id="xfa:XF_0134"/>
<dbReference type="PATRIC" id="fig|160492.11.peg.141"/>
<dbReference type="eggNOG" id="COG0525">
    <property type="taxonomic scope" value="Bacteria"/>
</dbReference>
<dbReference type="HOGENOM" id="CLU_001493_0_2_6"/>
<dbReference type="Proteomes" id="UP000000812">
    <property type="component" value="Chromosome"/>
</dbReference>
<dbReference type="GO" id="GO:0005829">
    <property type="term" value="C:cytosol"/>
    <property type="evidence" value="ECO:0007669"/>
    <property type="project" value="TreeGrafter"/>
</dbReference>
<dbReference type="GO" id="GO:0002161">
    <property type="term" value="F:aminoacyl-tRNA deacylase activity"/>
    <property type="evidence" value="ECO:0007669"/>
    <property type="project" value="InterPro"/>
</dbReference>
<dbReference type="GO" id="GO:0005524">
    <property type="term" value="F:ATP binding"/>
    <property type="evidence" value="ECO:0007669"/>
    <property type="project" value="UniProtKB-UniRule"/>
</dbReference>
<dbReference type="GO" id="GO:0004832">
    <property type="term" value="F:valine-tRNA ligase activity"/>
    <property type="evidence" value="ECO:0007669"/>
    <property type="project" value="UniProtKB-UniRule"/>
</dbReference>
<dbReference type="GO" id="GO:0006438">
    <property type="term" value="P:valyl-tRNA aminoacylation"/>
    <property type="evidence" value="ECO:0007669"/>
    <property type="project" value="UniProtKB-UniRule"/>
</dbReference>
<dbReference type="CDD" id="cd07962">
    <property type="entry name" value="Anticodon_Ia_Val"/>
    <property type="match status" value="1"/>
</dbReference>
<dbReference type="CDD" id="cd00817">
    <property type="entry name" value="ValRS_core"/>
    <property type="match status" value="1"/>
</dbReference>
<dbReference type="FunFam" id="1.10.287.380:FF:000001">
    <property type="entry name" value="Valine--tRNA ligase"/>
    <property type="match status" value="1"/>
</dbReference>
<dbReference type="FunFam" id="3.40.50.620:FF:000032">
    <property type="entry name" value="Valine--tRNA ligase"/>
    <property type="match status" value="1"/>
</dbReference>
<dbReference type="FunFam" id="3.40.50.620:FF:000098">
    <property type="entry name" value="Valine--tRNA ligase"/>
    <property type="match status" value="1"/>
</dbReference>
<dbReference type="Gene3D" id="3.40.50.620">
    <property type="entry name" value="HUPs"/>
    <property type="match status" value="2"/>
</dbReference>
<dbReference type="Gene3D" id="1.10.730.10">
    <property type="entry name" value="Isoleucyl-tRNA Synthetase, Domain 1"/>
    <property type="match status" value="1"/>
</dbReference>
<dbReference type="Gene3D" id="1.10.287.380">
    <property type="entry name" value="Valyl-tRNA synthetase, C-terminal domain"/>
    <property type="match status" value="1"/>
</dbReference>
<dbReference type="Gene3D" id="3.90.740.10">
    <property type="entry name" value="Valyl/Leucyl/Isoleucyl-tRNA synthetase, editing domain"/>
    <property type="match status" value="1"/>
</dbReference>
<dbReference type="HAMAP" id="MF_02004">
    <property type="entry name" value="Val_tRNA_synth_type1"/>
    <property type="match status" value="1"/>
</dbReference>
<dbReference type="InterPro" id="IPR001412">
    <property type="entry name" value="aa-tRNA-synth_I_CS"/>
</dbReference>
<dbReference type="InterPro" id="IPR002300">
    <property type="entry name" value="aa-tRNA-synth_Ia"/>
</dbReference>
<dbReference type="InterPro" id="IPR033705">
    <property type="entry name" value="Anticodon_Ia_Val"/>
</dbReference>
<dbReference type="InterPro" id="IPR013155">
    <property type="entry name" value="M/V/L/I-tRNA-synth_anticd-bd"/>
</dbReference>
<dbReference type="InterPro" id="IPR014729">
    <property type="entry name" value="Rossmann-like_a/b/a_fold"/>
</dbReference>
<dbReference type="InterPro" id="IPR010978">
    <property type="entry name" value="tRNA-bd_arm"/>
</dbReference>
<dbReference type="InterPro" id="IPR009080">
    <property type="entry name" value="tRNAsynth_Ia_anticodon-bd"/>
</dbReference>
<dbReference type="InterPro" id="IPR037118">
    <property type="entry name" value="Val-tRNA_synth_C_sf"/>
</dbReference>
<dbReference type="InterPro" id="IPR019499">
    <property type="entry name" value="Val-tRNA_synth_tRNA-bd"/>
</dbReference>
<dbReference type="InterPro" id="IPR009008">
    <property type="entry name" value="Val/Leu/Ile-tRNA-synth_edit"/>
</dbReference>
<dbReference type="InterPro" id="IPR002303">
    <property type="entry name" value="Valyl-tRNA_ligase"/>
</dbReference>
<dbReference type="NCBIfam" id="NF004349">
    <property type="entry name" value="PRK05729.1"/>
    <property type="match status" value="1"/>
</dbReference>
<dbReference type="NCBIfam" id="TIGR00422">
    <property type="entry name" value="valS"/>
    <property type="match status" value="1"/>
</dbReference>
<dbReference type="PANTHER" id="PTHR11946:SF93">
    <property type="entry name" value="VALINE--TRNA LIGASE, CHLOROPLASTIC_MITOCHONDRIAL 2"/>
    <property type="match status" value="1"/>
</dbReference>
<dbReference type="PANTHER" id="PTHR11946">
    <property type="entry name" value="VALYL-TRNA SYNTHETASES"/>
    <property type="match status" value="1"/>
</dbReference>
<dbReference type="Pfam" id="PF08264">
    <property type="entry name" value="Anticodon_1"/>
    <property type="match status" value="1"/>
</dbReference>
<dbReference type="Pfam" id="PF00133">
    <property type="entry name" value="tRNA-synt_1"/>
    <property type="match status" value="1"/>
</dbReference>
<dbReference type="Pfam" id="PF10458">
    <property type="entry name" value="Val_tRNA-synt_C"/>
    <property type="match status" value="1"/>
</dbReference>
<dbReference type="PRINTS" id="PR00986">
    <property type="entry name" value="TRNASYNTHVAL"/>
</dbReference>
<dbReference type="SUPFAM" id="SSF47323">
    <property type="entry name" value="Anticodon-binding domain of a subclass of class I aminoacyl-tRNA synthetases"/>
    <property type="match status" value="1"/>
</dbReference>
<dbReference type="SUPFAM" id="SSF52374">
    <property type="entry name" value="Nucleotidylyl transferase"/>
    <property type="match status" value="1"/>
</dbReference>
<dbReference type="SUPFAM" id="SSF46589">
    <property type="entry name" value="tRNA-binding arm"/>
    <property type="match status" value="1"/>
</dbReference>
<dbReference type="SUPFAM" id="SSF50677">
    <property type="entry name" value="ValRS/IleRS/LeuRS editing domain"/>
    <property type="match status" value="1"/>
</dbReference>
<dbReference type="PROSITE" id="PS00178">
    <property type="entry name" value="AA_TRNA_LIGASE_I"/>
    <property type="match status" value="1"/>
</dbReference>
<name>SYV_XYLFA</name>
<protein>
    <recommendedName>
        <fullName evidence="1">Valine--tRNA ligase</fullName>
        <ecNumber evidence="1">6.1.1.9</ecNumber>
    </recommendedName>
    <alternativeName>
        <fullName evidence="1">Valyl-tRNA synthetase</fullName>
        <shortName evidence="1">ValRS</shortName>
    </alternativeName>
</protein>
<accession>Q9PH12</accession>
<sequence>MSQFTSSYDPTSFEARLYAAWEAAGHFKPSGTGQPYTILLPPPNVTGTLHMGHAFQQTLMDALVRYHRMCGDDTLWQVGTDHAGIATEMVVSRNVVLEGHGETRDSLGRDGFINKVWEWKQQSGDTIERQMRRLGVSADWSRSTFTMDPQPSAAVTEAFVRWYEAGLIYRGQRLVNWDPVLKTAISDLEVENVAEEGMLWSIRYPLSDGVTYEHVEHDAAGNEILRETRDSLIVATTRPETLLGDTAVMVHPEDRRYTALIGKTVTLPLTGRHIPVIGDAYVDPTFGTGVVKVTPAHDFNDYQIGLRHRLPMIQVLDDAACIVSKTSIQSGMPSGATSDTTNTPSDPEASSAANQHDTLVMPAHLAGLDRYAARKQILADLDAQGLLVAAIPHTLQVPRGDRTGQVIEPYLTAQWFVKMETLAARGLALVERGAVTFVPPNWINTYRHWMENIQDWCISRQLWWGHRIPAWFDTQGGVYVGRSEAEVRAKHALGPEVTLTQDNDVLETWFSSQLWPFSTLGWPDPTAMAEHGYARYLPSSVLVTGFDIIFFWVARMIMATDHFTGNVPFHDVYITGLIRDAQGQKMSKSKGNVLDPLDIIDGITLDDLVAKRTTGLMQPKLAEKIAKATRKEFPEGIAPHGADALRFTIAALATHGRDIKFDLGRAEGYKNFCNKLWNATRFVLMNTADDTAHSPAQHQAGQDGQDAPRTPQPRTDAEQWILSRLTAITAEAHAQFAAYRFDLLAQALYEFAWNEFCDWFVELAKPALNSDDTQAAASTRHTLLYVLETLLRLLHPLIPFITEELWRQVAPRLGIQATTLMLRPYPQPQQLETAAFANAAADVEWLKIMVSALRRIRSTLNVPPSRRVSLLLQGDQEVDRRRITHFATALHFLLKLEHIDWLGADSAAPPSATAIVGTLKLLVPLEGLIDVDAERVRLDKEIKRVESEIDKSNGKLSNAVFVQNAPAAVVEQERSRLTEWTTQLNGLRERRATL</sequence>
<proteinExistence type="inferred from homology"/>
<feature type="chain" id="PRO_0000106244" description="Valine--tRNA ligase">
    <location>
        <begin position="1"/>
        <end position="994"/>
    </location>
</feature>
<feature type="region of interest" description="Disordered" evidence="2">
    <location>
        <begin position="329"/>
        <end position="355"/>
    </location>
</feature>
<feature type="region of interest" description="Disordered" evidence="2">
    <location>
        <begin position="692"/>
        <end position="714"/>
    </location>
</feature>
<feature type="coiled-coil region" evidence="1">
    <location>
        <begin position="928"/>
        <end position="994"/>
    </location>
</feature>
<feature type="short sequence motif" description="'HIGH' region">
    <location>
        <begin position="43"/>
        <end position="53"/>
    </location>
</feature>
<feature type="short sequence motif" description="'KMSKS' region">
    <location>
        <begin position="585"/>
        <end position="589"/>
    </location>
</feature>
<feature type="compositionally biased region" description="Polar residues" evidence="2">
    <location>
        <begin position="329"/>
        <end position="345"/>
    </location>
</feature>
<feature type="compositionally biased region" description="Low complexity" evidence="2">
    <location>
        <begin position="696"/>
        <end position="707"/>
    </location>
</feature>
<feature type="binding site" evidence="1">
    <location>
        <position position="588"/>
    </location>
    <ligand>
        <name>ATP</name>
        <dbReference type="ChEBI" id="CHEBI:30616"/>
    </ligand>
</feature>
<comment type="function">
    <text evidence="1">Catalyzes the attachment of valine to tRNA(Val). As ValRS can inadvertently accommodate and process structurally similar amino acids such as threonine, to avoid such errors, it has a 'posttransfer' editing activity that hydrolyzes mischarged Thr-tRNA(Val) in a tRNA-dependent manner.</text>
</comment>
<comment type="catalytic activity">
    <reaction evidence="1">
        <text>tRNA(Val) + L-valine + ATP = L-valyl-tRNA(Val) + AMP + diphosphate</text>
        <dbReference type="Rhea" id="RHEA:10704"/>
        <dbReference type="Rhea" id="RHEA-COMP:9672"/>
        <dbReference type="Rhea" id="RHEA-COMP:9708"/>
        <dbReference type="ChEBI" id="CHEBI:30616"/>
        <dbReference type="ChEBI" id="CHEBI:33019"/>
        <dbReference type="ChEBI" id="CHEBI:57762"/>
        <dbReference type="ChEBI" id="CHEBI:78442"/>
        <dbReference type="ChEBI" id="CHEBI:78537"/>
        <dbReference type="ChEBI" id="CHEBI:456215"/>
        <dbReference type="EC" id="6.1.1.9"/>
    </reaction>
</comment>
<comment type="subunit">
    <text evidence="1">Monomer.</text>
</comment>
<comment type="subcellular location">
    <subcellularLocation>
        <location evidence="1">Cytoplasm</location>
    </subcellularLocation>
</comment>
<comment type="domain">
    <text evidence="1">ValRS has two distinct active sites: one for aminoacylation and one for editing. The misactivated threonine is translocated from the active site to the editing site.</text>
</comment>
<comment type="domain">
    <text evidence="1">The C-terminal coiled-coil domain is crucial for aminoacylation activity.</text>
</comment>
<comment type="similarity">
    <text evidence="1">Belongs to the class-I aminoacyl-tRNA synthetase family. ValS type 1 subfamily.</text>
</comment>
<reference key="1">
    <citation type="journal article" date="2000" name="Nature">
        <title>The genome sequence of the plant pathogen Xylella fastidiosa.</title>
        <authorList>
            <person name="Simpson A.J.G."/>
            <person name="Reinach F.C."/>
            <person name="Arruda P."/>
            <person name="Abreu F.A."/>
            <person name="Acencio M."/>
            <person name="Alvarenga R."/>
            <person name="Alves L.M.C."/>
            <person name="Araya J.E."/>
            <person name="Baia G.S."/>
            <person name="Baptista C.S."/>
            <person name="Barros M.H."/>
            <person name="Bonaccorsi E.D."/>
            <person name="Bordin S."/>
            <person name="Bove J.M."/>
            <person name="Briones M.R.S."/>
            <person name="Bueno M.R.P."/>
            <person name="Camargo A.A."/>
            <person name="Camargo L.E.A."/>
            <person name="Carraro D.M."/>
            <person name="Carrer H."/>
            <person name="Colauto N.B."/>
            <person name="Colombo C."/>
            <person name="Costa F.F."/>
            <person name="Costa M.C.R."/>
            <person name="Costa-Neto C.M."/>
            <person name="Coutinho L.L."/>
            <person name="Cristofani M."/>
            <person name="Dias-Neto E."/>
            <person name="Docena C."/>
            <person name="El-Dorry H."/>
            <person name="Facincani A.P."/>
            <person name="Ferreira A.J.S."/>
            <person name="Ferreira V.C.A."/>
            <person name="Ferro J.A."/>
            <person name="Fraga J.S."/>
            <person name="Franca S.C."/>
            <person name="Franco M.C."/>
            <person name="Frohme M."/>
            <person name="Furlan L.R."/>
            <person name="Garnier M."/>
            <person name="Goldman G.H."/>
            <person name="Goldman M.H.S."/>
            <person name="Gomes S.L."/>
            <person name="Gruber A."/>
            <person name="Ho P.L."/>
            <person name="Hoheisel J.D."/>
            <person name="Junqueira M.L."/>
            <person name="Kemper E.L."/>
            <person name="Kitajima J.P."/>
            <person name="Krieger J.E."/>
            <person name="Kuramae E.E."/>
            <person name="Laigret F."/>
            <person name="Lambais M.R."/>
            <person name="Leite L.C.C."/>
            <person name="Lemos E.G.M."/>
            <person name="Lemos M.V.F."/>
            <person name="Lopes S.A."/>
            <person name="Lopes C.R."/>
            <person name="Machado J.A."/>
            <person name="Machado M.A."/>
            <person name="Madeira A.M.B.N."/>
            <person name="Madeira H.M.F."/>
            <person name="Marino C.L."/>
            <person name="Marques M.V."/>
            <person name="Martins E.A.L."/>
            <person name="Martins E.M.F."/>
            <person name="Matsukuma A.Y."/>
            <person name="Menck C.F.M."/>
            <person name="Miracca E.C."/>
            <person name="Miyaki C.Y."/>
            <person name="Monteiro-Vitorello C.B."/>
            <person name="Moon D.H."/>
            <person name="Nagai M.A."/>
            <person name="Nascimento A.L.T.O."/>
            <person name="Netto L.E.S."/>
            <person name="Nhani A. Jr."/>
            <person name="Nobrega F.G."/>
            <person name="Nunes L.R."/>
            <person name="Oliveira M.A."/>
            <person name="de Oliveira M.C."/>
            <person name="de Oliveira R.C."/>
            <person name="Palmieri D.A."/>
            <person name="Paris A."/>
            <person name="Peixoto B.R."/>
            <person name="Pereira G.A.G."/>
            <person name="Pereira H.A. Jr."/>
            <person name="Pesquero J.B."/>
            <person name="Quaggio R.B."/>
            <person name="Roberto P.G."/>
            <person name="Rodrigues V."/>
            <person name="de Rosa A.J.M."/>
            <person name="de Rosa V.E. Jr."/>
            <person name="de Sa R.G."/>
            <person name="Santelli R.V."/>
            <person name="Sawasaki H.E."/>
            <person name="da Silva A.C.R."/>
            <person name="da Silva A.M."/>
            <person name="da Silva F.R."/>
            <person name="Silva W.A. Jr."/>
            <person name="da Silveira J.F."/>
            <person name="Silvestri M.L.Z."/>
            <person name="Siqueira W.J."/>
            <person name="de Souza A.A."/>
            <person name="de Souza A.P."/>
            <person name="Terenzi M.F."/>
            <person name="Truffi D."/>
            <person name="Tsai S.M."/>
            <person name="Tsuhako M.H."/>
            <person name="Vallada H."/>
            <person name="Van Sluys M.A."/>
            <person name="Verjovski-Almeida S."/>
            <person name="Vettore A.L."/>
            <person name="Zago M.A."/>
            <person name="Zatz M."/>
            <person name="Meidanis J."/>
            <person name="Setubal J.C."/>
        </authorList>
    </citation>
    <scope>NUCLEOTIDE SEQUENCE [LARGE SCALE GENOMIC DNA]</scope>
    <source>
        <strain>9a5c</strain>
    </source>
</reference>
<evidence type="ECO:0000255" key="1">
    <source>
        <dbReference type="HAMAP-Rule" id="MF_02004"/>
    </source>
</evidence>
<evidence type="ECO:0000256" key="2">
    <source>
        <dbReference type="SAM" id="MobiDB-lite"/>
    </source>
</evidence>
<keyword id="KW-0030">Aminoacyl-tRNA synthetase</keyword>
<keyword id="KW-0067">ATP-binding</keyword>
<keyword id="KW-0175">Coiled coil</keyword>
<keyword id="KW-0963">Cytoplasm</keyword>
<keyword id="KW-0436">Ligase</keyword>
<keyword id="KW-0547">Nucleotide-binding</keyword>
<keyword id="KW-0648">Protein biosynthesis</keyword>